<dbReference type="EMBL" id="AB028620">
    <property type="protein sequence ID" value="BAB02920.1"/>
    <property type="molecule type" value="Genomic_DNA"/>
</dbReference>
<dbReference type="EMBL" id="CP002686">
    <property type="protein sequence ID" value="AEE75953.1"/>
    <property type="molecule type" value="Genomic_DNA"/>
</dbReference>
<dbReference type="EMBL" id="AY099622">
    <property type="protein sequence ID" value="AAM20473.1"/>
    <property type="molecule type" value="mRNA"/>
</dbReference>
<dbReference type="EMBL" id="BT001249">
    <property type="protein sequence ID" value="AAN65136.1"/>
    <property type="molecule type" value="mRNA"/>
</dbReference>
<dbReference type="EMBL" id="AY084645">
    <property type="protein sequence ID" value="AAM61208.1"/>
    <property type="molecule type" value="mRNA"/>
</dbReference>
<dbReference type="RefSeq" id="NP_566578.1">
    <molecule id="Q9LRP1-1"/>
    <property type="nucleotide sequence ID" value="NM_112623.5"/>
</dbReference>
<dbReference type="SMR" id="Q9LRP1"/>
<dbReference type="BioGRID" id="6341">
    <property type="interactions" value="35"/>
</dbReference>
<dbReference type="FunCoup" id="Q9LRP1">
    <property type="interactions" value="963"/>
</dbReference>
<dbReference type="IntAct" id="Q9LRP1">
    <property type="interactions" value="32"/>
</dbReference>
<dbReference type="STRING" id="3702.Q9LRP1"/>
<dbReference type="iPTMnet" id="Q9LRP1"/>
<dbReference type="SwissPalm" id="Q9LRP1"/>
<dbReference type="PaxDb" id="3702-AT3G17440.1"/>
<dbReference type="ProteomicsDB" id="251121">
    <molecule id="Q9LRP1-1"/>
</dbReference>
<dbReference type="EnsemblPlants" id="AT3G17440.1">
    <molecule id="Q9LRP1-1"/>
    <property type="protein sequence ID" value="AT3G17440.1"/>
    <property type="gene ID" value="AT3G17440"/>
</dbReference>
<dbReference type="GeneID" id="821008"/>
<dbReference type="Gramene" id="AT3G17440.1">
    <molecule id="Q9LRP1-1"/>
    <property type="protein sequence ID" value="AT3G17440.1"/>
    <property type="gene ID" value="AT3G17440"/>
</dbReference>
<dbReference type="KEGG" id="ath:AT3G17440"/>
<dbReference type="Araport" id="AT3G17440"/>
<dbReference type="TAIR" id="AT3G17440">
    <property type="gene designation" value="NPSN13"/>
</dbReference>
<dbReference type="eggNOG" id="ENOG502QQ25">
    <property type="taxonomic scope" value="Eukaryota"/>
</dbReference>
<dbReference type="HOGENOM" id="CLU_058321_0_0_1"/>
<dbReference type="InParanoid" id="Q9LRP1"/>
<dbReference type="OMA" id="TREVKWA"/>
<dbReference type="OrthoDB" id="19261at2759"/>
<dbReference type="PhylomeDB" id="Q9LRP1"/>
<dbReference type="PRO" id="PR:Q9LRP1"/>
<dbReference type="Proteomes" id="UP000006548">
    <property type="component" value="Chromosome 3"/>
</dbReference>
<dbReference type="ExpressionAtlas" id="Q9LRP1">
    <property type="expression patterns" value="baseline and differential"/>
</dbReference>
<dbReference type="GO" id="GO:0005829">
    <property type="term" value="C:cytosol"/>
    <property type="evidence" value="ECO:0007005"/>
    <property type="project" value="TAIR"/>
</dbReference>
<dbReference type="GO" id="GO:0005886">
    <property type="term" value="C:plasma membrane"/>
    <property type="evidence" value="ECO:0007005"/>
    <property type="project" value="TAIR"/>
</dbReference>
<dbReference type="GO" id="GO:0031201">
    <property type="term" value="C:SNARE complex"/>
    <property type="evidence" value="ECO:0007669"/>
    <property type="project" value="InterPro"/>
</dbReference>
<dbReference type="GO" id="GO:0005484">
    <property type="term" value="F:SNAP receptor activity"/>
    <property type="evidence" value="ECO:0007669"/>
    <property type="project" value="InterPro"/>
</dbReference>
<dbReference type="GO" id="GO:0015031">
    <property type="term" value="P:protein transport"/>
    <property type="evidence" value="ECO:0007669"/>
    <property type="project" value="UniProtKB-KW"/>
</dbReference>
<dbReference type="CDD" id="cd15861">
    <property type="entry name" value="SNARE_SNAP25N_23N_29N_SEC9N"/>
    <property type="match status" value="1"/>
</dbReference>
<dbReference type="FunFam" id="1.20.5.110:FF:000021">
    <property type="entry name" value="novel plant SNARE 11"/>
    <property type="match status" value="1"/>
</dbReference>
<dbReference type="Gene3D" id="1.20.5.110">
    <property type="match status" value="1"/>
</dbReference>
<dbReference type="InterPro" id="IPR044766">
    <property type="entry name" value="NPSN/SNAP25-like_N_SNARE"/>
</dbReference>
<dbReference type="InterPro" id="IPR000727">
    <property type="entry name" value="T_SNARE_dom"/>
</dbReference>
<dbReference type="PANTHER" id="PTHR21230:SF79">
    <property type="entry name" value="T-SNARE COILED-COIL HOMOLOGY DOMAIN-CONTAINING PROTEIN"/>
    <property type="match status" value="1"/>
</dbReference>
<dbReference type="PANTHER" id="PTHR21230">
    <property type="entry name" value="VESICLE TRANSPORT V-SNARE PROTEIN VTI1-RELATED"/>
    <property type="match status" value="1"/>
</dbReference>
<dbReference type="Pfam" id="PF12352">
    <property type="entry name" value="V-SNARE_C"/>
    <property type="match status" value="1"/>
</dbReference>
<dbReference type="SMART" id="SM00397">
    <property type="entry name" value="t_SNARE"/>
    <property type="match status" value="1"/>
</dbReference>
<dbReference type="SUPFAM" id="SSF58038">
    <property type="entry name" value="SNARE fusion complex"/>
    <property type="match status" value="1"/>
</dbReference>
<dbReference type="PROSITE" id="PS50192">
    <property type="entry name" value="T_SNARE"/>
    <property type="match status" value="1"/>
</dbReference>
<keyword id="KW-0025">Alternative splicing</keyword>
<keyword id="KW-0175">Coiled coil</keyword>
<keyword id="KW-0472">Membrane</keyword>
<keyword id="KW-0597">Phosphoprotein</keyword>
<keyword id="KW-0653">Protein transport</keyword>
<keyword id="KW-1185">Reference proteome</keyword>
<keyword id="KW-0812">Transmembrane</keyword>
<keyword id="KW-1133">Transmembrane helix</keyword>
<keyword id="KW-0813">Transport</keyword>
<proteinExistence type="evidence at protein level"/>
<organism>
    <name type="scientific">Arabidopsis thaliana</name>
    <name type="common">Mouse-ear cress</name>
    <dbReference type="NCBI Taxonomy" id="3702"/>
    <lineage>
        <taxon>Eukaryota</taxon>
        <taxon>Viridiplantae</taxon>
        <taxon>Streptophyta</taxon>
        <taxon>Embryophyta</taxon>
        <taxon>Tracheophyta</taxon>
        <taxon>Spermatophyta</taxon>
        <taxon>Magnoliopsida</taxon>
        <taxon>eudicotyledons</taxon>
        <taxon>Gunneridae</taxon>
        <taxon>Pentapetalae</taxon>
        <taxon>rosids</taxon>
        <taxon>malvids</taxon>
        <taxon>Brassicales</taxon>
        <taxon>Brassicaceae</taxon>
        <taxon>Camelineae</taxon>
        <taxon>Arabidopsis</taxon>
    </lineage>
</organism>
<name>NPS13_ARATH</name>
<sequence>MASNLPMSPQLEQIHGEIRDHFRALANGFQRLDKIKDSTRQSKQLEELTDKMRECKRLVKEFDRELKDEEARNSPEVNKQLNDEKQSMIKELNSYVALRKTYMSTLGNKKVELFDMGAGVSGEPTAEENVQVASSMSNQELVDAGMKRMDETDQAIERSKQVVEQTLEVGTQTAANLKGQTDQMGRVVNHLDTIQFSIKKASQLVKEIGRQVATDKCIMGFLFLIVCGVVAIIIVKIVNPNNKDIRDIPGLAPPAQSRKLLYLRNQDYM</sequence>
<feature type="chain" id="PRO_0000213618" description="Novel plant SNARE 13">
    <location>
        <begin position="1"/>
        <end position="269"/>
    </location>
</feature>
<feature type="topological domain" description="Cytoplasmic" evidence="2">
    <location>
        <begin position="1"/>
        <end position="217"/>
    </location>
</feature>
<feature type="transmembrane region" description="Helical; Anchor for type IV membrane protein" evidence="2">
    <location>
        <begin position="218"/>
        <end position="238"/>
    </location>
</feature>
<feature type="topological domain" description="Vesicular" evidence="2">
    <location>
        <begin position="239"/>
        <end position="269"/>
    </location>
</feature>
<feature type="domain" description="t-SNARE coiled-coil homology" evidence="3">
    <location>
        <begin position="146"/>
        <end position="208"/>
    </location>
</feature>
<feature type="coiled-coil region" evidence="2">
    <location>
        <begin position="33"/>
        <end position="94"/>
    </location>
</feature>
<feature type="modified residue" description="Phosphoserine" evidence="5">
    <location>
        <position position="74"/>
    </location>
</feature>
<feature type="sequence conflict" description="In Ref. 4; AAM20473." evidence="4" ref="4">
    <original>VN</original>
    <variation>D</variation>
    <location>
        <begin position="188"/>
        <end position="189"/>
    </location>
</feature>
<gene>
    <name type="primary">NPSN13</name>
    <name type="ordered locus">At3g17440</name>
    <name type="ORF">MTO12.3</name>
</gene>
<accession>Q9LRP1</accession>
<evidence type="ECO:0000250" key="1"/>
<evidence type="ECO:0000255" key="2"/>
<evidence type="ECO:0000255" key="3">
    <source>
        <dbReference type="PROSITE-ProRule" id="PRU00202"/>
    </source>
</evidence>
<evidence type="ECO:0000305" key="4"/>
<evidence type="ECO:0007744" key="5">
    <source>
    </source>
</evidence>
<reference key="1">
    <citation type="journal article" date="2000" name="DNA Res.">
        <title>Structural analysis of Arabidopsis thaliana chromosome 3. I. Sequence features of the regions of 4,504,864 bp covered by sixty P1 and TAC clones.</title>
        <authorList>
            <person name="Sato S."/>
            <person name="Nakamura Y."/>
            <person name="Kaneko T."/>
            <person name="Katoh T."/>
            <person name="Asamizu E."/>
            <person name="Tabata S."/>
        </authorList>
    </citation>
    <scope>NUCLEOTIDE SEQUENCE [LARGE SCALE GENOMIC DNA]</scope>
    <source>
        <strain>cv. Columbia</strain>
    </source>
</reference>
<reference key="2">
    <citation type="journal article" date="2017" name="Plant J.">
        <title>Araport11: a complete reannotation of the Arabidopsis thaliana reference genome.</title>
        <authorList>
            <person name="Cheng C.Y."/>
            <person name="Krishnakumar V."/>
            <person name="Chan A.P."/>
            <person name="Thibaud-Nissen F."/>
            <person name="Schobel S."/>
            <person name="Town C.D."/>
        </authorList>
    </citation>
    <scope>GENOME REANNOTATION</scope>
    <source>
        <strain>cv. Columbia</strain>
    </source>
</reference>
<reference key="3">
    <citation type="journal article" date="2003" name="Science">
        <title>Empirical analysis of transcriptional activity in the Arabidopsis genome.</title>
        <authorList>
            <person name="Yamada K."/>
            <person name="Lim J."/>
            <person name="Dale J.M."/>
            <person name="Chen H."/>
            <person name="Shinn P."/>
            <person name="Palm C.J."/>
            <person name="Southwick A.M."/>
            <person name="Wu H.C."/>
            <person name="Kim C.J."/>
            <person name="Nguyen M."/>
            <person name="Pham P.K."/>
            <person name="Cheuk R.F."/>
            <person name="Karlin-Newmann G."/>
            <person name="Liu S.X."/>
            <person name="Lam B."/>
            <person name="Sakano H."/>
            <person name="Wu T."/>
            <person name="Yu G."/>
            <person name="Miranda M."/>
            <person name="Quach H.L."/>
            <person name="Tripp M."/>
            <person name="Chang C.H."/>
            <person name="Lee J.M."/>
            <person name="Toriumi M.J."/>
            <person name="Chan M.M."/>
            <person name="Tang C.C."/>
            <person name="Onodera C.S."/>
            <person name="Deng J.M."/>
            <person name="Akiyama K."/>
            <person name="Ansari Y."/>
            <person name="Arakawa T."/>
            <person name="Banh J."/>
            <person name="Banno F."/>
            <person name="Bowser L."/>
            <person name="Brooks S.Y."/>
            <person name="Carninci P."/>
            <person name="Chao Q."/>
            <person name="Choy N."/>
            <person name="Enju A."/>
            <person name="Goldsmith A.D."/>
            <person name="Gurjal M."/>
            <person name="Hansen N.F."/>
            <person name="Hayashizaki Y."/>
            <person name="Johnson-Hopson C."/>
            <person name="Hsuan V.W."/>
            <person name="Iida K."/>
            <person name="Karnes M."/>
            <person name="Khan S."/>
            <person name="Koesema E."/>
            <person name="Ishida J."/>
            <person name="Jiang P.X."/>
            <person name="Jones T."/>
            <person name="Kawai J."/>
            <person name="Kamiya A."/>
            <person name="Meyers C."/>
            <person name="Nakajima M."/>
            <person name="Narusaka M."/>
            <person name="Seki M."/>
            <person name="Sakurai T."/>
            <person name="Satou M."/>
            <person name="Tamse R."/>
            <person name="Vaysberg M."/>
            <person name="Wallender E.K."/>
            <person name="Wong C."/>
            <person name="Yamamura Y."/>
            <person name="Yuan S."/>
            <person name="Shinozaki K."/>
            <person name="Davis R.W."/>
            <person name="Theologis A."/>
            <person name="Ecker J.R."/>
        </authorList>
    </citation>
    <scope>NUCLEOTIDE SEQUENCE [LARGE SCALE MRNA]</scope>
    <source>
        <strain>cv. Columbia</strain>
    </source>
</reference>
<reference key="4">
    <citation type="submission" date="2002-03" db="EMBL/GenBank/DDBJ databases">
        <title>Full-length cDNA from Arabidopsis thaliana.</title>
        <authorList>
            <person name="Brover V.V."/>
            <person name="Troukhan M.E."/>
            <person name="Alexandrov N.A."/>
            <person name="Lu Y.-P."/>
            <person name="Flavell R.B."/>
            <person name="Feldmann K.A."/>
        </authorList>
    </citation>
    <scope>NUCLEOTIDE SEQUENCE [LARGE SCALE MRNA]</scope>
</reference>
<reference key="5">
    <citation type="journal article" date="2009" name="Plant Physiol.">
        <title>Large-scale Arabidopsis phosphoproteome profiling reveals novel chloroplast kinase substrates and phosphorylation networks.</title>
        <authorList>
            <person name="Reiland S."/>
            <person name="Messerli G."/>
            <person name="Baerenfaller K."/>
            <person name="Gerrits B."/>
            <person name="Endler A."/>
            <person name="Grossmann J."/>
            <person name="Gruissem W."/>
            <person name="Baginsky S."/>
        </authorList>
    </citation>
    <scope>PHOSPHORYLATION [LARGE SCALE ANALYSIS] AT SER-74</scope>
    <scope>IDENTIFICATION BY MASS SPECTROMETRY [LARGE SCALE ANALYSIS]</scope>
</reference>
<protein>
    <recommendedName>
        <fullName>Novel plant SNARE 13</fullName>
        <shortName>AtNPSN13</shortName>
    </recommendedName>
</protein>
<comment type="function">
    <text evidence="1">Vesicle trafficking protein that functions in the secretory pathway.</text>
</comment>
<comment type="subcellular location">
    <subcellularLocation>
        <location evidence="1">Membrane</location>
        <topology evidence="1">Single-pass type IV membrane protein</topology>
    </subcellularLocation>
</comment>
<comment type="alternative products">
    <event type="alternative splicing"/>
    <isoform>
        <id>Q9LRP1-1</id>
        <name>1</name>
        <sequence type="displayed"/>
    </isoform>
    <text>A number of isoforms are produced. According to EST sequences.</text>
</comment>
<comment type="similarity">
    <text evidence="4">Belongs to the novel plant SNARE family.</text>
</comment>